<dbReference type="EC" id="1.11.1.11"/>
<dbReference type="GO" id="GO:0005737">
    <property type="term" value="C:cytoplasm"/>
    <property type="evidence" value="ECO:0007669"/>
    <property type="project" value="UniProtKB-SubCell"/>
</dbReference>
<dbReference type="GO" id="GO:0016688">
    <property type="term" value="F:L-ascorbate peroxidase activity"/>
    <property type="evidence" value="ECO:0007669"/>
    <property type="project" value="UniProtKB-EC"/>
</dbReference>
<dbReference type="GO" id="GO:0046872">
    <property type="term" value="F:metal ion binding"/>
    <property type="evidence" value="ECO:0007669"/>
    <property type="project" value="UniProtKB-KW"/>
</dbReference>
<dbReference type="GO" id="GO:0042744">
    <property type="term" value="P:hydrogen peroxide catabolic process"/>
    <property type="evidence" value="ECO:0007669"/>
    <property type="project" value="UniProtKB-KW"/>
</dbReference>
<sequence>EGLLQLPSDK</sequence>
<name>APX_PSEMZ</name>
<feature type="chain" id="PRO_0000347322" description="L-ascorbate peroxidase, cytosolic">
    <location>
        <begin position="1" status="less than"/>
        <end position="10"/>
    </location>
</feature>
<feature type="non-terminal residue" evidence="4">
    <location>
        <position position="1"/>
    </location>
</feature>
<feature type="non-terminal residue" evidence="4">
    <location>
        <position position="10"/>
    </location>
</feature>
<comment type="function">
    <text evidence="2">Plays a key role in hydrogen peroxide removal.</text>
</comment>
<comment type="catalytic activity">
    <reaction>
        <text>L-ascorbate + H2O2 = L-dehydroascorbate + 2 H2O</text>
        <dbReference type="Rhea" id="RHEA:22996"/>
        <dbReference type="ChEBI" id="CHEBI:15377"/>
        <dbReference type="ChEBI" id="CHEBI:16240"/>
        <dbReference type="ChEBI" id="CHEBI:38290"/>
        <dbReference type="ChEBI" id="CHEBI:58539"/>
        <dbReference type="EC" id="1.11.1.11"/>
    </reaction>
</comment>
<comment type="cofactor">
    <cofactor evidence="2">
        <name>heme b</name>
        <dbReference type="ChEBI" id="CHEBI:60344"/>
    </cofactor>
    <text evidence="2">Binds 1 heme b (iron(II)-protoporphyrin IX) group.</text>
</comment>
<comment type="subcellular location">
    <subcellularLocation>
        <location evidence="2">Cytoplasm</location>
    </subcellularLocation>
</comment>
<comment type="miscellaneous">
    <text evidence="1">Binds one cation per subunit; probably K(+), but might also be Ca(2+).</text>
</comment>
<comment type="similarity">
    <text evidence="3">Belongs to the peroxidase family. Ascorbate peroxidase subfamily.</text>
</comment>
<protein>
    <recommendedName>
        <fullName evidence="2">L-ascorbate peroxidase, cytosolic</fullName>
        <ecNumber>1.11.1.11</ecNumber>
    </recommendedName>
</protein>
<accession>P85940</accession>
<evidence type="ECO:0000250" key="1"/>
<evidence type="ECO:0000250" key="2">
    <source>
        <dbReference type="UniProtKB" id="P48534"/>
    </source>
</evidence>
<evidence type="ECO:0000255" key="3"/>
<evidence type="ECO:0000303" key="4">
    <source>
    </source>
</evidence>
<organism>
    <name type="scientific">Pseudotsuga menziesii</name>
    <name type="common">Douglas-fir</name>
    <name type="synonym">Abies menziesii</name>
    <dbReference type="NCBI Taxonomy" id="3357"/>
    <lineage>
        <taxon>Eukaryota</taxon>
        <taxon>Viridiplantae</taxon>
        <taxon>Streptophyta</taxon>
        <taxon>Embryophyta</taxon>
        <taxon>Tracheophyta</taxon>
        <taxon>Spermatophyta</taxon>
        <taxon>Pinopsida</taxon>
        <taxon>Pinidae</taxon>
        <taxon>Conifers I</taxon>
        <taxon>Pinales</taxon>
        <taxon>Pinaceae</taxon>
        <taxon>Pseudotsuga</taxon>
    </lineage>
</organism>
<reference key="1">
    <citation type="journal article" date="2008" name="J. Proteomics">
        <title>A proteomics approach to identify proteins differentially expressed in Douglas-fir seedlings infected by Phellinus sulphurascens.</title>
        <authorList>
            <person name="Islam M.A."/>
            <person name="Sturrock R.N."/>
            <person name="Ekramoddoullah A.K.M."/>
        </authorList>
    </citation>
    <scope>IDENTIFICATION BY MASS SPECTROMETRY</scope>
</reference>
<proteinExistence type="evidence at protein level"/>
<keyword id="KW-0106">Calcium</keyword>
<keyword id="KW-0963">Cytoplasm</keyword>
<keyword id="KW-0349">Heme</keyword>
<keyword id="KW-0376">Hydrogen peroxide</keyword>
<keyword id="KW-0408">Iron</keyword>
<keyword id="KW-0479">Metal-binding</keyword>
<keyword id="KW-0560">Oxidoreductase</keyword>
<keyword id="KW-0575">Peroxidase</keyword>
<keyword id="KW-0630">Potassium</keyword>